<organism>
    <name type="scientific">Salmonella typhimurium (strain LT2 / SGSC1412 / ATCC 700720)</name>
    <dbReference type="NCBI Taxonomy" id="99287"/>
    <lineage>
        <taxon>Bacteria</taxon>
        <taxon>Pseudomonadati</taxon>
        <taxon>Pseudomonadota</taxon>
        <taxon>Gammaproteobacteria</taxon>
        <taxon>Enterobacterales</taxon>
        <taxon>Enterobacteriaceae</taxon>
        <taxon>Salmonella</taxon>
    </lineage>
</organism>
<sequence>MFMRTVNYSEARQNLAEVLESAVTGGPVTITRRGHKSAVIISAEEFERYQTARMDDEFAAIMAVHGNELRELADK</sequence>
<protein>
    <recommendedName>
        <fullName>Orphan antitoxin YefM</fullName>
    </recommendedName>
</protein>
<evidence type="ECO:0000305" key="1"/>
<gene>
    <name type="primary">yefM</name>
    <name type="synonym">yhhV</name>
    <name type="ordered locus">STM3559</name>
</gene>
<accession>P40819</accession>
<keyword id="KW-1185">Reference proteome</keyword>
<keyword id="KW-1277">Toxin-antitoxin system</keyword>
<proteinExistence type="inferred from homology"/>
<name>YEFM_SALTY</name>
<reference key="1">
    <citation type="journal article" date="2001" name="Nature">
        <title>Complete genome sequence of Salmonella enterica serovar Typhimurium LT2.</title>
        <authorList>
            <person name="McClelland M."/>
            <person name="Sanderson K.E."/>
            <person name="Spieth J."/>
            <person name="Clifton S.W."/>
            <person name="Latreille P."/>
            <person name="Courtney L."/>
            <person name="Porwollik S."/>
            <person name="Ali J."/>
            <person name="Dante M."/>
            <person name="Du F."/>
            <person name="Hou S."/>
            <person name="Layman D."/>
            <person name="Leonard S."/>
            <person name="Nguyen C."/>
            <person name="Scott K."/>
            <person name="Holmes A."/>
            <person name="Grewal N."/>
            <person name="Mulvaney E."/>
            <person name="Ryan E."/>
            <person name="Sun H."/>
            <person name="Florea L."/>
            <person name="Miller W."/>
            <person name="Stoneking T."/>
            <person name="Nhan M."/>
            <person name="Waterston R."/>
            <person name="Wilson R.K."/>
        </authorList>
    </citation>
    <scope>NUCLEOTIDE SEQUENCE [LARGE SCALE GENOMIC DNA]</scope>
    <source>
        <strain>LT2 / SGSC1412 / ATCC 700720</strain>
    </source>
</reference>
<reference key="2">
    <citation type="journal article" date="1992" name="J. Biochem.">
        <title>Nucleotide sequences and characterization of liv genes encoding components of the high-affinity branched-chain amino acid transport system in Salmonella typhimurium.</title>
        <authorList>
            <person name="Matsubara K."/>
            <person name="Ohnishi K."/>
            <person name="Kiritani K."/>
        </authorList>
    </citation>
    <scope>NUCLEOTIDE SEQUENCE [GENOMIC DNA] OF 1-68</scope>
    <source>
        <strain>LT2</strain>
    </source>
</reference>
<reference key="3">
    <citation type="journal article" date="1994" name="Nat. Genet.">
        <title>Large scale bacterial gene discovery by similarity search.</title>
        <authorList>
            <person name="Robison K."/>
            <person name="Gilbert W."/>
            <person name="Church G.M."/>
        </authorList>
    </citation>
    <scope>IDENTIFICATION</scope>
</reference>
<comment type="function">
    <text>Putative antitoxin component of a toxin-antitoxin (TA) system; its cognate toxin is unknown.</text>
</comment>
<comment type="similarity">
    <text evidence="1">Belongs to the phD/YefM antitoxin family.</text>
</comment>
<comment type="caution">
    <text evidence="1">YoeB, the specific toxin against which this antitoxin acts in E.coli, is not encoded in this genome.</text>
</comment>
<feature type="chain" id="PRO_0000213744" description="Orphan antitoxin YefM">
    <location>
        <begin position="1"/>
        <end position="75"/>
    </location>
</feature>
<dbReference type="EMBL" id="AE006468">
    <property type="protein sequence ID" value="AAL22419.1"/>
    <property type="molecule type" value="Genomic_DNA"/>
</dbReference>
<dbReference type="EMBL" id="D12589">
    <property type="status" value="NOT_ANNOTATED_CDS"/>
    <property type="molecule type" value="Genomic_DNA"/>
</dbReference>
<dbReference type="RefSeq" id="NP_462460.1">
    <property type="nucleotide sequence ID" value="NC_003197.2"/>
</dbReference>
<dbReference type="RefSeq" id="WP_000481005.1">
    <property type="nucleotide sequence ID" value="NC_003197.2"/>
</dbReference>
<dbReference type="SMR" id="P40819"/>
<dbReference type="STRING" id="99287.STM3559"/>
<dbReference type="PaxDb" id="99287-STM3559"/>
<dbReference type="DNASU" id="1255082"/>
<dbReference type="GeneID" id="1255082"/>
<dbReference type="KEGG" id="stm:STM3559"/>
<dbReference type="PATRIC" id="fig|99287.12.peg.3762"/>
<dbReference type="HOGENOM" id="CLU_193635_0_0_6"/>
<dbReference type="OMA" id="VHGNEIR"/>
<dbReference type="PhylomeDB" id="P40819"/>
<dbReference type="BioCyc" id="SENT99287:STM3559-MONOMER"/>
<dbReference type="Proteomes" id="UP000001014">
    <property type="component" value="Chromosome"/>
</dbReference>
<dbReference type="CollecTF" id="EXPREG_00000a90"/>
<dbReference type="GO" id="GO:0032993">
    <property type="term" value="C:protein-DNA complex"/>
    <property type="evidence" value="ECO:0000315"/>
    <property type="project" value="CollecTF"/>
</dbReference>
<dbReference type="GO" id="GO:0003700">
    <property type="term" value="F:DNA-binding transcription factor activity"/>
    <property type="evidence" value="ECO:0000318"/>
    <property type="project" value="GO_Central"/>
</dbReference>
<dbReference type="GO" id="GO:0001217">
    <property type="term" value="F:DNA-binding transcription repressor activity"/>
    <property type="evidence" value="ECO:0000315"/>
    <property type="project" value="CollecTF"/>
</dbReference>
<dbReference type="GO" id="GO:0043565">
    <property type="term" value="F:sequence-specific DNA binding"/>
    <property type="evidence" value="ECO:0000318"/>
    <property type="project" value="GO_Central"/>
</dbReference>
<dbReference type="GO" id="GO:0000976">
    <property type="term" value="F:transcription cis-regulatory region binding"/>
    <property type="evidence" value="ECO:0000315"/>
    <property type="project" value="CollecTF"/>
</dbReference>
<dbReference type="GO" id="GO:0006355">
    <property type="term" value="P:regulation of DNA-templated transcription"/>
    <property type="evidence" value="ECO:0000318"/>
    <property type="project" value="GO_Central"/>
</dbReference>
<dbReference type="FunFam" id="3.40.1620.10:FF:000003">
    <property type="entry name" value="Antitoxin"/>
    <property type="match status" value="1"/>
</dbReference>
<dbReference type="Gene3D" id="3.40.1620.10">
    <property type="entry name" value="YefM-like domain"/>
    <property type="match status" value="1"/>
</dbReference>
<dbReference type="InterPro" id="IPR006442">
    <property type="entry name" value="Antitoxin_Phd/YefM"/>
</dbReference>
<dbReference type="InterPro" id="IPR051405">
    <property type="entry name" value="phD/YefM_antitoxin"/>
</dbReference>
<dbReference type="InterPro" id="IPR036165">
    <property type="entry name" value="YefM-like_sf"/>
</dbReference>
<dbReference type="NCBIfam" id="TIGR01552">
    <property type="entry name" value="phd_fam"/>
    <property type="match status" value="1"/>
</dbReference>
<dbReference type="PANTHER" id="PTHR33713">
    <property type="entry name" value="ANTITOXIN YAFN-RELATED"/>
    <property type="match status" value="1"/>
</dbReference>
<dbReference type="PANTHER" id="PTHR33713:SF6">
    <property type="entry name" value="ANTITOXIN YEFM"/>
    <property type="match status" value="1"/>
</dbReference>
<dbReference type="Pfam" id="PF02604">
    <property type="entry name" value="PhdYeFM_antitox"/>
    <property type="match status" value="1"/>
</dbReference>
<dbReference type="SUPFAM" id="SSF143120">
    <property type="entry name" value="YefM-like"/>
    <property type="match status" value="1"/>
</dbReference>